<reference key="1">
    <citation type="journal article" date="1999" name="Nucleic Acids Res.">
        <title>Tissue-specific translational regulation of alternative rabbit 15-lipoxygenase mRNAs differing in their 3'-untranslated regions.</title>
        <authorList>
            <person name="Thiele B.J."/>
            <person name="Berger M."/>
            <person name="Huth A."/>
            <person name="Reimann I."/>
            <person name="Schwarz K."/>
            <person name="Thiele H."/>
        </authorList>
    </citation>
    <scope>NUCLEOTIDE SEQUENCE [MRNA]</scope>
</reference>
<accession>O19048</accession>
<protein>
    <recommendedName>
        <fullName>Poly(rC)-binding protein 1</fullName>
    </recommendedName>
    <alternativeName>
        <fullName>Alpha-CP1</fullName>
    </alternativeName>
    <alternativeName>
        <fullName>Heterogeneous nuclear ribonucleoprotein E1</fullName>
        <shortName>hnRNP E1</shortName>
    </alternativeName>
</protein>
<keyword id="KW-0007">Acetylation</keyword>
<keyword id="KW-0963">Cytoplasm</keyword>
<keyword id="KW-0238">DNA-binding</keyword>
<keyword id="KW-1017">Isopeptide bond</keyword>
<keyword id="KW-0539">Nucleus</keyword>
<keyword id="KW-0597">Phosphoprotein</keyword>
<keyword id="KW-1185">Reference proteome</keyword>
<keyword id="KW-0677">Repeat</keyword>
<keyword id="KW-0687">Ribonucleoprotein</keyword>
<keyword id="KW-0694">RNA-binding</keyword>
<keyword id="KW-0832">Ubl conjugation</keyword>
<gene>
    <name type="primary">PCBP1</name>
</gene>
<organism>
    <name type="scientific">Oryctolagus cuniculus</name>
    <name type="common">Rabbit</name>
    <dbReference type="NCBI Taxonomy" id="9986"/>
    <lineage>
        <taxon>Eukaryota</taxon>
        <taxon>Metazoa</taxon>
        <taxon>Chordata</taxon>
        <taxon>Craniata</taxon>
        <taxon>Vertebrata</taxon>
        <taxon>Euteleostomi</taxon>
        <taxon>Mammalia</taxon>
        <taxon>Eutheria</taxon>
        <taxon>Euarchontoglires</taxon>
        <taxon>Glires</taxon>
        <taxon>Lagomorpha</taxon>
        <taxon>Leporidae</taxon>
        <taxon>Oryctolagus</taxon>
    </lineage>
</organism>
<evidence type="ECO:0000250" key="1">
    <source>
        <dbReference type="UniProtKB" id="P60335"/>
    </source>
</evidence>
<evidence type="ECO:0000250" key="2">
    <source>
        <dbReference type="UniProtKB" id="Q15365"/>
    </source>
</evidence>
<evidence type="ECO:0000255" key="3">
    <source>
        <dbReference type="PROSITE-ProRule" id="PRU00117"/>
    </source>
</evidence>
<name>PCBP1_RABIT</name>
<sequence length="356" mass="37498">MDAGVTESGLNVTLTIRLLMHGKEVGSIIGKKGESVKRIREESGARINISEGNCPERIITLTGPTNAIFKAFAMIIDKLEEDINSSMTNSTAASRPPVTLRLVVPATQCGSLIGKGGCKIKEIRESTGAQVQVAGDMLPNSTERAITIAGVPQSVTECVKQICLVMLETLSQSPQGRVMTIPYQPMPASSPVICAGGQDRCSDAAGYPHATHDLEGPPLDAYSIQGQHTISPLDLAKLNQVARQQSHFAMMHGGTGFAGIDSSSPEVKGYWASLDASTQTTHELTIPNNLIGCIIGRQGANINEIRQMSGAQIKIANPVEGSSGRQVTITGSAASISLAQYLINARLSSEKGMGCS</sequence>
<comment type="function">
    <text evidence="1 2">Single-stranded nucleic acid binding protein that binds preferentially to oligo dC (By similarity). Together with PCBP2, required for erythropoiesis, possibly by regulating mRNA splicing (By similarity).</text>
</comment>
<comment type="subcellular location">
    <subcellularLocation>
        <location evidence="2">Nucleus</location>
    </subcellularLocation>
    <subcellularLocation>
        <location evidence="2">Cytoplasm</location>
    </subcellularLocation>
    <text evidence="2">Loosely bound in the nucleus. May shuttle between the nucleus and the cytoplasm.</text>
</comment>
<comment type="PTM">
    <text evidence="2">Phosphorylated; lowers poly(rC)-binding activity.</text>
</comment>
<feature type="chain" id="PRO_0000050089" description="Poly(rC)-binding protein 1">
    <location>
        <begin position="1"/>
        <end position="356"/>
    </location>
</feature>
<feature type="domain" description="KH 1" evidence="3">
    <location>
        <begin position="13"/>
        <end position="75"/>
    </location>
</feature>
<feature type="domain" description="KH 2" evidence="3">
    <location>
        <begin position="97"/>
        <end position="162"/>
    </location>
</feature>
<feature type="domain" description="KH 3" evidence="3">
    <location>
        <begin position="279"/>
        <end position="343"/>
    </location>
</feature>
<feature type="modified residue" description="N-acetylmethionine" evidence="2">
    <location>
        <position position="1"/>
    </location>
</feature>
<feature type="modified residue" description="Phosphoserine" evidence="2">
    <location>
        <position position="173"/>
    </location>
</feature>
<feature type="modified residue" description="Phosphoserine" evidence="1">
    <location>
        <position position="189"/>
    </location>
</feature>
<feature type="modified residue" description="Phosphoserine" evidence="2">
    <location>
        <position position="190"/>
    </location>
</feature>
<feature type="modified residue" description="Phosphoserine" evidence="2">
    <location>
        <position position="246"/>
    </location>
</feature>
<feature type="modified residue" description="Phosphoserine" evidence="2">
    <location>
        <position position="264"/>
    </location>
</feature>
<feature type="modified residue" description="Phosphoserine" evidence="2">
    <location>
        <position position="273"/>
    </location>
</feature>
<feature type="cross-link" description="Glycyl lysine isopeptide (Lys-Gly) (interchain with G-Cter in SUMO2)" evidence="2">
    <location>
        <position position="115"/>
    </location>
</feature>
<dbReference type="EMBL" id="AJ003023">
    <property type="protein sequence ID" value="CAA05814.1"/>
    <property type="molecule type" value="mRNA"/>
</dbReference>
<dbReference type="RefSeq" id="NP_001075593.1">
    <property type="nucleotide sequence ID" value="NM_001082124.1"/>
</dbReference>
<dbReference type="SMR" id="O19048"/>
<dbReference type="FunCoup" id="O19048">
    <property type="interactions" value="1270"/>
</dbReference>
<dbReference type="STRING" id="9986.ENSOCUP00000020092"/>
<dbReference type="PaxDb" id="9986-ENSOCUP00000020092"/>
<dbReference type="Ensembl" id="ENSOCUT00000003633.2">
    <property type="protein sequence ID" value="ENSOCUP00000020092.1"/>
    <property type="gene ID" value="ENSOCUG00000003634.2"/>
</dbReference>
<dbReference type="GeneID" id="100008848"/>
<dbReference type="KEGG" id="ocu:100008848"/>
<dbReference type="CTD" id="5093"/>
<dbReference type="eggNOG" id="KOG2190">
    <property type="taxonomic scope" value="Eukaryota"/>
</dbReference>
<dbReference type="GeneTree" id="ENSGT00940000161582"/>
<dbReference type="HOGENOM" id="CLU_022670_0_1_1"/>
<dbReference type="InParanoid" id="O19048"/>
<dbReference type="OMA" id="SHHLIGY"/>
<dbReference type="OrthoDB" id="442947at2759"/>
<dbReference type="TreeFam" id="TF318292"/>
<dbReference type="Proteomes" id="UP000001811">
    <property type="component" value="Chromosome 2"/>
</dbReference>
<dbReference type="Bgee" id="ENSOCUG00000003634">
    <property type="expression patterns" value="Expressed in embryo and 15 other cell types or tissues"/>
</dbReference>
<dbReference type="GO" id="GO:0036464">
    <property type="term" value="C:cytoplasmic ribonucleoprotein granule"/>
    <property type="evidence" value="ECO:0007669"/>
    <property type="project" value="Ensembl"/>
</dbReference>
<dbReference type="GO" id="GO:0005829">
    <property type="term" value="C:cytosol"/>
    <property type="evidence" value="ECO:0007669"/>
    <property type="project" value="Ensembl"/>
</dbReference>
<dbReference type="GO" id="GO:0016607">
    <property type="term" value="C:nuclear speck"/>
    <property type="evidence" value="ECO:0007669"/>
    <property type="project" value="Ensembl"/>
</dbReference>
<dbReference type="GO" id="GO:1990904">
    <property type="term" value="C:ribonucleoprotein complex"/>
    <property type="evidence" value="ECO:0007669"/>
    <property type="project" value="UniProtKB-KW"/>
</dbReference>
<dbReference type="GO" id="GO:0000981">
    <property type="term" value="F:DNA-binding transcription factor activity, RNA polymerase II-specific"/>
    <property type="evidence" value="ECO:0007669"/>
    <property type="project" value="Ensembl"/>
</dbReference>
<dbReference type="GO" id="GO:0003730">
    <property type="term" value="F:mRNA 3'-UTR binding"/>
    <property type="evidence" value="ECO:0000250"/>
    <property type="project" value="UniProtKB"/>
</dbReference>
<dbReference type="GO" id="GO:0098847">
    <property type="term" value="F:sequence-specific single stranded DNA binding"/>
    <property type="evidence" value="ECO:0007669"/>
    <property type="project" value="Ensembl"/>
</dbReference>
<dbReference type="GO" id="GO:0045944">
    <property type="term" value="P:positive regulation of transcription by RNA polymerase II"/>
    <property type="evidence" value="ECO:0007669"/>
    <property type="project" value="Ensembl"/>
</dbReference>
<dbReference type="GO" id="GO:0039694">
    <property type="term" value="P:viral RNA genome replication"/>
    <property type="evidence" value="ECO:0007669"/>
    <property type="project" value="Ensembl"/>
</dbReference>
<dbReference type="CDD" id="cd22515">
    <property type="entry name" value="KH-I_PCBP1_2_rpt1"/>
    <property type="match status" value="1"/>
</dbReference>
<dbReference type="CDD" id="cd22518">
    <property type="entry name" value="KH-I_PCBP1_2_rpt2"/>
    <property type="match status" value="1"/>
</dbReference>
<dbReference type="CDD" id="cd22521">
    <property type="entry name" value="KH-I_PCBP1_2_rpt3"/>
    <property type="match status" value="1"/>
</dbReference>
<dbReference type="FunFam" id="3.30.1370.10:FF:000002">
    <property type="entry name" value="poly(RC)-binding protein 2 isoform X1"/>
    <property type="match status" value="1"/>
</dbReference>
<dbReference type="FunFam" id="3.30.1370.10:FF:000003">
    <property type="entry name" value="poly(RC)-binding protein 2 isoform X1"/>
    <property type="match status" value="1"/>
</dbReference>
<dbReference type="FunFam" id="3.30.1370.10:FF:000005">
    <property type="entry name" value="poly(RC)-binding protein 2 isoform X1"/>
    <property type="match status" value="1"/>
</dbReference>
<dbReference type="Gene3D" id="3.30.1370.10">
    <property type="entry name" value="K Homology domain, type 1"/>
    <property type="match status" value="3"/>
</dbReference>
<dbReference type="InterPro" id="IPR004087">
    <property type="entry name" value="KH_dom"/>
</dbReference>
<dbReference type="InterPro" id="IPR004088">
    <property type="entry name" value="KH_dom_type_1"/>
</dbReference>
<dbReference type="InterPro" id="IPR036612">
    <property type="entry name" value="KH_dom_type_1_sf"/>
</dbReference>
<dbReference type="PANTHER" id="PTHR10288">
    <property type="entry name" value="KH DOMAIN CONTAINING RNA BINDING PROTEIN"/>
    <property type="match status" value="1"/>
</dbReference>
<dbReference type="Pfam" id="PF00013">
    <property type="entry name" value="KH_1"/>
    <property type="match status" value="3"/>
</dbReference>
<dbReference type="SMART" id="SM00322">
    <property type="entry name" value="KH"/>
    <property type="match status" value="3"/>
</dbReference>
<dbReference type="SUPFAM" id="SSF54791">
    <property type="entry name" value="Eukaryotic type KH-domain (KH-domain type I)"/>
    <property type="match status" value="3"/>
</dbReference>
<dbReference type="PROSITE" id="PS50084">
    <property type="entry name" value="KH_TYPE_1"/>
    <property type="match status" value="3"/>
</dbReference>
<proteinExistence type="evidence at transcript level"/>